<reference key="1">
    <citation type="submission" date="2008-02" db="EMBL/GenBank/DDBJ databases">
        <title>Complete sequence of chromosome 1 of Burkholderia cenocepacia MC0-3.</title>
        <authorList>
            <person name="Copeland A."/>
            <person name="Lucas S."/>
            <person name="Lapidus A."/>
            <person name="Barry K."/>
            <person name="Bruce D."/>
            <person name="Goodwin L."/>
            <person name="Glavina del Rio T."/>
            <person name="Dalin E."/>
            <person name="Tice H."/>
            <person name="Pitluck S."/>
            <person name="Chain P."/>
            <person name="Malfatti S."/>
            <person name="Shin M."/>
            <person name="Vergez L."/>
            <person name="Schmutz J."/>
            <person name="Larimer F."/>
            <person name="Land M."/>
            <person name="Hauser L."/>
            <person name="Kyrpides N."/>
            <person name="Mikhailova N."/>
            <person name="Tiedje J."/>
            <person name="Richardson P."/>
        </authorList>
    </citation>
    <scope>NUCLEOTIDE SEQUENCE [LARGE SCALE GENOMIC DNA]</scope>
    <source>
        <strain>MC0-3</strain>
    </source>
</reference>
<protein>
    <recommendedName>
        <fullName evidence="1">Putative iron-sulfur cluster insertion protein ErpA</fullName>
    </recommendedName>
</protein>
<feature type="chain" id="PRO_1000144898" description="Putative iron-sulfur cluster insertion protein ErpA">
    <location>
        <begin position="1"/>
        <end position="123"/>
    </location>
</feature>
<feature type="binding site" evidence="1">
    <location>
        <position position="51"/>
    </location>
    <ligand>
        <name>iron-sulfur cluster</name>
        <dbReference type="ChEBI" id="CHEBI:30408"/>
    </ligand>
</feature>
<feature type="binding site" evidence="1">
    <location>
        <position position="115"/>
    </location>
    <ligand>
        <name>iron-sulfur cluster</name>
        <dbReference type="ChEBI" id="CHEBI:30408"/>
    </ligand>
</feature>
<feature type="binding site" evidence="1">
    <location>
        <position position="117"/>
    </location>
    <ligand>
        <name>iron-sulfur cluster</name>
        <dbReference type="ChEBI" id="CHEBI:30408"/>
    </ligand>
</feature>
<comment type="function">
    <text evidence="1">Required for insertion of 4Fe-4S clusters.</text>
</comment>
<comment type="cofactor">
    <cofactor evidence="1">
        <name>iron-sulfur cluster</name>
        <dbReference type="ChEBI" id="CHEBI:30408"/>
    </cofactor>
    <text evidence="1">Binds 1 iron-sulfur cluster per subunit.</text>
</comment>
<comment type="subunit">
    <text evidence="1">Homodimer.</text>
</comment>
<comment type="similarity">
    <text evidence="1">Belongs to the HesB/IscA family.</text>
</comment>
<evidence type="ECO:0000255" key="1">
    <source>
        <dbReference type="HAMAP-Rule" id="MF_01380"/>
    </source>
</evidence>
<gene>
    <name evidence="1" type="primary">erpA</name>
    <name type="ordered locus">Bcenmc03_0648</name>
</gene>
<dbReference type="EMBL" id="CP000958">
    <property type="protein sequence ID" value="ACA89826.1"/>
    <property type="molecule type" value="Genomic_DNA"/>
</dbReference>
<dbReference type="RefSeq" id="WP_006476903.1">
    <property type="nucleotide sequence ID" value="NC_010508.1"/>
</dbReference>
<dbReference type="SMR" id="B1JVU6"/>
<dbReference type="GeneID" id="83047448"/>
<dbReference type="KEGG" id="bcm:Bcenmc03_0648"/>
<dbReference type="HOGENOM" id="CLU_069054_5_3_4"/>
<dbReference type="Proteomes" id="UP000002169">
    <property type="component" value="Chromosome 1"/>
</dbReference>
<dbReference type="GO" id="GO:0051537">
    <property type="term" value="F:2 iron, 2 sulfur cluster binding"/>
    <property type="evidence" value="ECO:0007669"/>
    <property type="project" value="TreeGrafter"/>
</dbReference>
<dbReference type="GO" id="GO:0051539">
    <property type="term" value="F:4 iron, 4 sulfur cluster binding"/>
    <property type="evidence" value="ECO:0007669"/>
    <property type="project" value="TreeGrafter"/>
</dbReference>
<dbReference type="GO" id="GO:0005506">
    <property type="term" value="F:iron ion binding"/>
    <property type="evidence" value="ECO:0007669"/>
    <property type="project" value="UniProtKB-UniRule"/>
</dbReference>
<dbReference type="GO" id="GO:0016226">
    <property type="term" value="P:iron-sulfur cluster assembly"/>
    <property type="evidence" value="ECO:0007669"/>
    <property type="project" value="UniProtKB-UniRule"/>
</dbReference>
<dbReference type="FunFam" id="2.60.300.12:FF:000002">
    <property type="entry name" value="Iron-sulfur cluster insertion protein ErpA"/>
    <property type="match status" value="1"/>
</dbReference>
<dbReference type="Gene3D" id="2.60.300.12">
    <property type="entry name" value="HesB-like domain"/>
    <property type="match status" value="1"/>
</dbReference>
<dbReference type="HAMAP" id="MF_01380">
    <property type="entry name" value="Fe_S_insert_ErpA"/>
    <property type="match status" value="1"/>
</dbReference>
<dbReference type="InterPro" id="IPR000361">
    <property type="entry name" value="FeS_biogenesis"/>
</dbReference>
<dbReference type="InterPro" id="IPR016092">
    <property type="entry name" value="FeS_cluster_insertion"/>
</dbReference>
<dbReference type="InterPro" id="IPR017870">
    <property type="entry name" value="FeS_cluster_insertion_CS"/>
</dbReference>
<dbReference type="InterPro" id="IPR023063">
    <property type="entry name" value="FeS_cluster_insertion_RrpA"/>
</dbReference>
<dbReference type="InterPro" id="IPR035903">
    <property type="entry name" value="HesB-like_dom_sf"/>
</dbReference>
<dbReference type="NCBIfam" id="TIGR00049">
    <property type="entry name" value="iron-sulfur cluster assembly accessory protein"/>
    <property type="match status" value="1"/>
</dbReference>
<dbReference type="NCBIfam" id="NF010147">
    <property type="entry name" value="PRK13623.1"/>
    <property type="match status" value="1"/>
</dbReference>
<dbReference type="PANTHER" id="PTHR43011">
    <property type="entry name" value="IRON-SULFUR CLUSTER ASSEMBLY 2 HOMOLOG, MITOCHONDRIAL"/>
    <property type="match status" value="1"/>
</dbReference>
<dbReference type="PANTHER" id="PTHR43011:SF1">
    <property type="entry name" value="IRON-SULFUR CLUSTER ASSEMBLY 2 HOMOLOG, MITOCHONDRIAL"/>
    <property type="match status" value="1"/>
</dbReference>
<dbReference type="Pfam" id="PF01521">
    <property type="entry name" value="Fe-S_biosyn"/>
    <property type="match status" value="1"/>
</dbReference>
<dbReference type="SUPFAM" id="SSF89360">
    <property type="entry name" value="HesB-like domain"/>
    <property type="match status" value="1"/>
</dbReference>
<dbReference type="PROSITE" id="PS01152">
    <property type="entry name" value="HESB"/>
    <property type="match status" value="1"/>
</dbReference>
<sequence>MNAVTETAATTTDMPLPFVFTDAAADKVKQLIDEEGNPDLKLRVFVQGGGCSGFQYGFTFDEEVNEDDTVMNKNGVQLLIDSMSYQYLVGAEIDYKDDLNGAQFVIKNPNATTTCGCGSSFSV</sequence>
<accession>B1JVU6</accession>
<organism>
    <name type="scientific">Burkholderia orbicola (strain MC0-3)</name>
    <dbReference type="NCBI Taxonomy" id="406425"/>
    <lineage>
        <taxon>Bacteria</taxon>
        <taxon>Pseudomonadati</taxon>
        <taxon>Pseudomonadota</taxon>
        <taxon>Betaproteobacteria</taxon>
        <taxon>Burkholderiales</taxon>
        <taxon>Burkholderiaceae</taxon>
        <taxon>Burkholderia</taxon>
        <taxon>Burkholderia cepacia complex</taxon>
        <taxon>Burkholderia orbicola</taxon>
    </lineage>
</organism>
<proteinExistence type="inferred from homology"/>
<name>ERPA_BURO0</name>
<keyword id="KW-0408">Iron</keyword>
<keyword id="KW-0411">Iron-sulfur</keyword>
<keyword id="KW-0479">Metal-binding</keyword>